<proteinExistence type="inferred from homology"/>
<evidence type="ECO:0000250" key="1"/>
<evidence type="ECO:0000305" key="2"/>
<sequence>MSRTLYDKVWDDHVIDRHLVHEVTSPQAFEGLRNASRRVRRPDCTLATVDHNIPTTTRKKFKSITTFIDEADSRTQCETLETNVKEFELTYFGMEDSRQGIVHVIGPEQGFTLPGTTVVCGDSHTSTHGAFGALAFGIGTSEVEHVLATQTLLQKKSKNMRVCVEGELTPGVTSKDVALHVIGLIGTAGGTRCVIEFCGSAIASLSMEARMSICNMSIEGGARAGMIAPDEITFEYLRGRPLAPEGAEWDKAVQYWKSLKSDPNAKYDIDVKIAASDIAPTITWGTSPQDVAPITANVPDPSSVSDPARKAAMERALEYIGLVPNTPLEEVKIDKAFIGSCTNSRIEDLRSAASIVKGKHIADWVYAMVVPGSGLVKRQAEREGLDKVFTDAGFDWREAGCSMCLGMNPDQLSPGERCASTSNRNFEGRQGAGGRTHLMSPAMAAAAAIRGYLTDVRKFSSTPMVPRSPPPKFQTIQPKVEDEAAHKQAADQADPVTDCPPAGSPVNKGAPVASAMPAFTTLKGVAAPLAISNVDTDMIIPKQFLKTIKRTGLGSALFYGLRYDPATGAEKPDFVLNQPAYRSSKILVCTGPNFGCGSSREHAPWAFNDFGIRCIIATSFADIFFNNCFKNGMLPIILSQEQVDTLAKYATQKAEIEVDLVHQKIRYPGGEIPFDXMIEEFRKHCLVNGLDDIGLTMQKDSAIEKFEAKRTSTWPWLDGKAYKGKATKVTAIGSASQPAKKLDW</sequence>
<reference key="1">
    <citation type="journal article" date="1990" name="Nucleic Acids Res.">
        <title>Nucleotide sequence of the Phycomyces blakesleeanus leu1 gene.</title>
        <authorList>
            <person name="Iturriaga E.A."/>
            <person name="Diaz-Minguez J.M."/>
            <person name="Benito E.P."/>
            <person name="Alvarez M.I."/>
            <person name="Eslava A.P."/>
        </authorList>
    </citation>
    <scope>NUCLEOTIDE SEQUENCE [GENOMIC DNA]</scope>
    <source>
        <strain>ATCC 8743b / DSM 1359 / FGSC 10004 / NBRC 33097 / NRRL 1555</strain>
    </source>
</reference>
<reference key="2">
    <citation type="journal article" date="1992" name="Curr. Genet.">
        <title>Heterologous transformation of Mucor circinelloides with the Phycomyces blakesleeanus leu1 gene.</title>
        <authorList>
            <person name="Iturriaga E.A."/>
            <person name="Diaz-Minguez J.M."/>
            <person name="Benito E.P."/>
            <person name="Alvarez M.I."/>
            <person name="Eslava A.P."/>
        </authorList>
    </citation>
    <scope>NUCLEOTIDE SEQUENCE [GENOMIC DNA]</scope>
    <source>
        <strain>ATCC 8743b / DSM 1359 / FGSC 10004 / NBRC 33097 / NRRL 1555</strain>
    </source>
</reference>
<reference key="3">
    <citation type="unpublished observations" date="1996-03">
        <authorList>
            <person name="Gibson T.J."/>
        </authorList>
    </citation>
    <scope>IDENTIFICATION OF PROBABLE FRAMESHIFT</scope>
</reference>
<gene>
    <name type="primary">leu1</name>
</gene>
<dbReference type="EC" id="4.2.1.33"/>
<dbReference type="EMBL" id="X53090">
    <property type="protein sequence ID" value="CAA37257.1"/>
    <property type="status" value="ALT_FRAME"/>
    <property type="molecule type" value="Genomic_DNA"/>
</dbReference>
<dbReference type="PIR" id="S26864">
    <property type="entry name" value="S26864"/>
</dbReference>
<dbReference type="VEuPathDB" id="FungiDB:PHYBLDRAFT_121521"/>
<dbReference type="UniPathway" id="UPA00048">
    <property type="reaction ID" value="UER00071"/>
</dbReference>
<dbReference type="GO" id="GO:0009316">
    <property type="term" value="C:3-isopropylmalate dehydratase complex"/>
    <property type="evidence" value="ECO:0007669"/>
    <property type="project" value="InterPro"/>
</dbReference>
<dbReference type="GO" id="GO:0003861">
    <property type="term" value="F:3-isopropylmalate dehydratase activity"/>
    <property type="evidence" value="ECO:0007669"/>
    <property type="project" value="UniProtKB-EC"/>
</dbReference>
<dbReference type="GO" id="GO:0051539">
    <property type="term" value="F:4 iron, 4 sulfur cluster binding"/>
    <property type="evidence" value="ECO:0007669"/>
    <property type="project" value="UniProtKB-KW"/>
</dbReference>
<dbReference type="GO" id="GO:0046872">
    <property type="term" value="F:metal ion binding"/>
    <property type="evidence" value="ECO:0007669"/>
    <property type="project" value="UniProtKB-KW"/>
</dbReference>
<dbReference type="GO" id="GO:0009098">
    <property type="term" value="P:L-leucine biosynthetic process"/>
    <property type="evidence" value="ECO:0007669"/>
    <property type="project" value="UniProtKB-UniPathway"/>
</dbReference>
<dbReference type="CDD" id="cd01583">
    <property type="entry name" value="IPMI"/>
    <property type="match status" value="1"/>
</dbReference>
<dbReference type="CDD" id="cd01577">
    <property type="entry name" value="IPMI_Swivel"/>
    <property type="match status" value="1"/>
</dbReference>
<dbReference type="FunFam" id="3.30.499.10:FF:000007">
    <property type="entry name" value="3-isopropylmalate dehydratase large subunit"/>
    <property type="match status" value="1"/>
</dbReference>
<dbReference type="FunFam" id="3.20.19.10:FF:000003">
    <property type="entry name" value="3-isopropylmalate dehydratase small subunit"/>
    <property type="match status" value="1"/>
</dbReference>
<dbReference type="Gene3D" id="3.30.499.10">
    <property type="entry name" value="Aconitase, domain 3"/>
    <property type="match status" value="2"/>
</dbReference>
<dbReference type="Gene3D" id="3.20.19.10">
    <property type="entry name" value="Aconitase, domain 4"/>
    <property type="match status" value="1"/>
</dbReference>
<dbReference type="HAMAP" id="MF_01026">
    <property type="entry name" value="LeuC_type1"/>
    <property type="match status" value="1"/>
</dbReference>
<dbReference type="HAMAP" id="MF_01031">
    <property type="entry name" value="LeuD_type1"/>
    <property type="match status" value="1"/>
</dbReference>
<dbReference type="InterPro" id="IPR004430">
    <property type="entry name" value="3-IsopropMal_deHydase_lsu"/>
</dbReference>
<dbReference type="InterPro" id="IPR004431">
    <property type="entry name" value="3-IsopropMal_deHydase_ssu"/>
</dbReference>
<dbReference type="InterPro" id="IPR012235">
    <property type="entry name" value="3-IsopropMal_deHydtase_ssu/lsu"/>
</dbReference>
<dbReference type="InterPro" id="IPR015931">
    <property type="entry name" value="Acnase/IPM_dHydase_lsu_aba_1/3"/>
</dbReference>
<dbReference type="InterPro" id="IPR001030">
    <property type="entry name" value="Acoase/IPM_deHydtase_lsu_aba"/>
</dbReference>
<dbReference type="InterPro" id="IPR015928">
    <property type="entry name" value="Aconitase/3IPM_dehydase_swvl"/>
</dbReference>
<dbReference type="InterPro" id="IPR018136">
    <property type="entry name" value="Aconitase_4Fe-4S_BS"/>
</dbReference>
<dbReference type="InterPro" id="IPR036008">
    <property type="entry name" value="Aconitase_4Fe-4S_dom"/>
</dbReference>
<dbReference type="InterPro" id="IPR000573">
    <property type="entry name" value="AconitaseA/IPMdHydase_ssu_swvl"/>
</dbReference>
<dbReference type="InterPro" id="IPR050067">
    <property type="entry name" value="IPM_dehydratase_rel_enz"/>
</dbReference>
<dbReference type="InterPro" id="IPR033941">
    <property type="entry name" value="IPMI_cat"/>
</dbReference>
<dbReference type="InterPro" id="IPR033940">
    <property type="entry name" value="IPMI_Swivel"/>
</dbReference>
<dbReference type="NCBIfam" id="TIGR00170">
    <property type="entry name" value="leuC"/>
    <property type="match status" value="1"/>
</dbReference>
<dbReference type="NCBIfam" id="TIGR00171">
    <property type="entry name" value="leuD"/>
    <property type="match status" value="1"/>
</dbReference>
<dbReference type="NCBIfam" id="NF002458">
    <property type="entry name" value="PRK01641.1"/>
    <property type="match status" value="1"/>
</dbReference>
<dbReference type="NCBIfam" id="NF004016">
    <property type="entry name" value="PRK05478.1"/>
    <property type="match status" value="1"/>
</dbReference>
<dbReference type="NCBIfam" id="NF009116">
    <property type="entry name" value="PRK12466.1"/>
    <property type="match status" value="1"/>
</dbReference>
<dbReference type="PANTHER" id="PTHR43822:SF9">
    <property type="entry name" value="3-ISOPROPYLMALATE DEHYDRATASE"/>
    <property type="match status" value="1"/>
</dbReference>
<dbReference type="PANTHER" id="PTHR43822">
    <property type="entry name" value="HOMOACONITASE, MITOCHONDRIAL-RELATED"/>
    <property type="match status" value="1"/>
</dbReference>
<dbReference type="Pfam" id="PF00330">
    <property type="entry name" value="Aconitase"/>
    <property type="match status" value="1"/>
</dbReference>
<dbReference type="Pfam" id="PF00694">
    <property type="entry name" value="Aconitase_C"/>
    <property type="match status" value="1"/>
</dbReference>
<dbReference type="PIRSF" id="PIRSF001418">
    <property type="entry name" value="ACN"/>
    <property type="match status" value="1"/>
</dbReference>
<dbReference type="PRINTS" id="PR00415">
    <property type="entry name" value="ACONITASE"/>
</dbReference>
<dbReference type="SUPFAM" id="SSF53732">
    <property type="entry name" value="Aconitase iron-sulfur domain"/>
    <property type="match status" value="1"/>
</dbReference>
<dbReference type="SUPFAM" id="SSF52016">
    <property type="entry name" value="LeuD/IlvD-like"/>
    <property type="match status" value="1"/>
</dbReference>
<dbReference type="PROSITE" id="PS00450">
    <property type="entry name" value="ACONITASE_1"/>
    <property type="match status" value="1"/>
</dbReference>
<dbReference type="PROSITE" id="PS01244">
    <property type="entry name" value="ACONITASE_2"/>
    <property type="match status" value="1"/>
</dbReference>
<feature type="chain" id="PRO_0000076888" description="3-isopropylmalate dehydratase">
    <location>
        <begin position="1"/>
        <end position="744"/>
    </location>
</feature>
<feature type="binding site" evidence="1">
    <location>
        <position position="341"/>
    </location>
    <ligand>
        <name>[4Fe-4S] cluster</name>
        <dbReference type="ChEBI" id="CHEBI:49883"/>
    </ligand>
</feature>
<feature type="binding site" evidence="1">
    <location>
        <position position="401"/>
    </location>
    <ligand>
        <name>[4Fe-4S] cluster</name>
        <dbReference type="ChEBI" id="CHEBI:49883"/>
    </ligand>
</feature>
<feature type="binding site" evidence="1">
    <location>
        <position position="404"/>
    </location>
    <ligand>
        <name>[4Fe-4S] cluster</name>
        <dbReference type="ChEBI" id="CHEBI:49883"/>
    </ligand>
</feature>
<protein>
    <recommendedName>
        <fullName>3-isopropylmalate dehydratase</fullName>
        <ecNumber>4.2.1.33</ecNumber>
    </recommendedName>
    <alternativeName>
        <fullName>Alpha-IPM isomerase</fullName>
        <shortName>IPMI</shortName>
    </alternativeName>
    <alternativeName>
        <fullName>Isopropylmalate isomerase</fullName>
    </alternativeName>
</protein>
<keyword id="KW-0004">4Fe-4S</keyword>
<keyword id="KW-0028">Amino-acid biosynthesis</keyword>
<keyword id="KW-0100">Branched-chain amino acid biosynthesis</keyword>
<keyword id="KW-0408">Iron</keyword>
<keyword id="KW-0411">Iron-sulfur</keyword>
<keyword id="KW-0432">Leucine biosynthesis</keyword>
<keyword id="KW-0456">Lyase</keyword>
<keyword id="KW-0479">Metal-binding</keyword>
<name>LEUC_PHYB8</name>
<comment type="function">
    <text>Catalyzes the isomerization between 2-isopropylmalate and 3-isopropylmalate, via the formation of 2-isopropylmaleate.</text>
</comment>
<comment type="catalytic activity">
    <reaction>
        <text>(2R,3S)-3-isopropylmalate = (2S)-2-isopropylmalate</text>
        <dbReference type="Rhea" id="RHEA:32287"/>
        <dbReference type="ChEBI" id="CHEBI:1178"/>
        <dbReference type="ChEBI" id="CHEBI:35121"/>
        <dbReference type="EC" id="4.2.1.33"/>
    </reaction>
</comment>
<comment type="cofactor">
    <cofactor evidence="1">
        <name>[4Fe-4S] cluster</name>
        <dbReference type="ChEBI" id="CHEBI:49883"/>
    </cofactor>
    <text evidence="1">Binds 1 [4Fe-4S] cluster per subunit.</text>
</comment>
<comment type="pathway">
    <text>Amino-acid biosynthesis; L-leucine biosynthesis; L-leucine from 3-methyl-2-oxobutanoate: step 2/4.</text>
</comment>
<comment type="subunit">
    <text>Monomer.</text>
</comment>
<comment type="similarity">
    <text evidence="2">Belongs to the aconitase/IPM isomerase family.</text>
</comment>
<comment type="sequence caution" evidence="2">
    <conflict type="frameshift">
        <sequence resource="EMBL-CDS" id="CAA37257"/>
    </conflict>
</comment>
<organism>
    <name type="scientific">Phycomyces blakesleeanus (strain ATCC 8743b / DSM 1359 / FGSC 10004 / NBRC 33097 / NRRL 1555)</name>
    <dbReference type="NCBI Taxonomy" id="763407"/>
    <lineage>
        <taxon>Eukaryota</taxon>
        <taxon>Fungi</taxon>
        <taxon>Fungi incertae sedis</taxon>
        <taxon>Mucoromycota</taxon>
        <taxon>Mucoromycotina</taxon>
        <taxon>Mucoromycetes</taxon>
        <taxon>Mucorales</taxon>
        <taxon>Phycomycetaceae</taxon>
        <taxon>Phycomyces</taxon>
    </lineage>
</organism>
<accession>P18250</accession>